<gene>
    <name evidence="1" type="primary">rpmJ</name>
    <name type="synonym">rpl36</name>
    <name type="ordered locus">asl4194</name>
</gene>
<reference key="1">
    <citation type="journal article" date="2001" name="DNA Res.">
        <title>Complete genomic sequence of the filamentous nitrogen-fixing cyanobacterium Anabaena sp. strain PCC 7120.</title>
        <authorList>
            <person name="Kaneko T."/>
            <person name="Nakamura Y."/>
            <person name="Wolk C.P."/>
            <person name="Kuritz T."/>
            <person name="Sasamoto S."/>
            <person name="Watanabe A."/>
            <person name="Iriguchi M."/>
            <person name="Ishikawa A."/>
            <person name="Kawashima K."/>
            <person name="Kimura T."/>
            <person name="Kishida Y."/>
            <person name="Kohara M."/>
            <person name="Matsumoto M."/>
            <person name="Matsuno A."/>
            <person name="Muraki A."/>
            <person name="Nakazaki N."/>
            <person name="Shimpo S."/>
            <person name="Sugimoto M."/>
            <person name="Takazawa M."/>
            <person name="Yamada M."/>
            <person name="Yasuda M."/>
            <person name="Tabata S."/>
        </authorList>
    </citation>
    <scope>NUCLEOTIDE SEQUENCE [LARGE SCALE GENOMIC DNA]</scope>
    <source>
        <strain>PCC 7120 / SAG 25.82 / UTEX 2576</strain>
    </source>
</reference>
<name>RL36_NOSS1</name>
<feature type="chain" id="PRO_0000126140" description="Large ribosomal subunit protein bL36">
    <location>
        <begin position="1"/>
        <end position="37"/>
    </location>
</feature>
<sequence length="37" mass="4350">MKVRASVKKICEKCNVIRRRGRVMVICVNPKHKQRQG</sequence>
<comment type="similarity">
    <text evidence="1">Belongs to the bacterial ribosomal protein bL36 family.</text>
</comment>
<proteinExistence type="inferred from homology"/>
<protein>
    <recommendedName>
        <fullName evidence="1">Large ribosomal subunit protein bL36</fullName>
    </recommendedName>
    <alternativeName>
        <fullName evidence="2">50S ribosomal protein L36</fullName>
    </alternativeName>
</protein>
<keyword id="KW-1185">Reference proteome</keyword>
<keyword id="KW-0687">Ribonucleoprotein</keyword>
<keyword id="KW-0689">Ribosomal protein</keyword>
<organism>
    <name type="scientific">Nostoc sp. (strain PCC 7120 / SAG 25.82 / UTEX 2576)</name>
    <dbReference type="NCBI Taxonomy" id="103690"/>
    <lineage>
        <taxon>Bacteria</taxon>
        <taxon>Bacillati</taxon>
        <taxon>Cyanobacteriota</taxon>
        <taxon>Cyanophyceae</taxon>
        <taxon>Nostocales</taxon>
        <taxon>Nostocaceae</taxon>
        <taxon>Nostoc</taxon>
    </lineage>
</organism>
<evidence type="ECO:0000255" key="1">
    <source>
        <dbReference type="HAMAP-Rule" id="MF_00251"/>
    </source>
</evidence>
<evidence type="ECO:0000305" key="2"/>
<accession>Q8YPK0</accession>
<dbReference type="EMBL" id="BA000019">
    <property type="protein sequence ID" value="BAB75893.1"/>
    <property type="molecule type" value="Genomic_DNA"/>
</dbReference>
<dbReference type="PIR" id="AC2330">
    <property type="entry name" value="AC2330"/>
</dbReference>
<dbReference type="RefSeq" id="WP_010998333.1">
    <property type="nucleotide sequence ID" value="NZ_RSCN01000010.1"/>
</dbReference>
<dbReference type="SMR" id="Q8YPK0"/>
<dbReference type="STRING" id="103690.gene:10496243"/>
<dbReference type="GeneID" id="58723370"/>
<dbReference type="KEGG" id="ana:asl4194"/>
<dbReference type="eggNOG" id="COG0257">
    <property type="taxonomic scope" value="Bacteria"/>
</dbReference>
<dbReference type="OrthoDB" id="9802520at2"/>
<dbReference type="Proteomes" id="UP000002483">
    <property type="component" value="Chromosome"/>
</dbReference>
<dbReference type="GO" id="GO:0005737">
    <property type="term" value="C:cytoplasm"/>
    <property type="evidence" value="ECO:0007669"/>
    <property type="project" value="UniProtKB-ARBA"/>
</dbReference>
<dbReference type="GO" id="GO:1990904">
    <property type="term" value="C:ribonucleoprotein complex"/>
    <property type="evidence" value="ECO:0007669"/>
    <property type="project" value="UniProtKB-KW"/>
</dbReference>
<dbReference type="GO" id="GO:0005840">
    <property type="term" value="C:ribosome"/>
    <property type="evidence" value="ECO:0007669"/>
    <property type="project" value="UniProtKB-KW"/>
</dbReference>
<dbReference type="GO" id="GO:0003735">
    <property type="term" value="F:structural constituent of ribosome"/>
    <property type="evidence" value="ECO:0007669"/>
    <property type="project" value="InterPro"/>
</dbReference>
<dbReference type="GO" id="GO:0006412">
    <property type="term" value="P:translation"/>
    <property type="evidence" value="ECO:0007669"/>
    <property type="project" value="UniProtKB-UniRule"/>
</dbReference>
<dbReference type="HAMAP" id="MF_00251">
    <property type="entry name" value="Ribosomal_bL36"/>
    <property type="match status" value="1"/>
</dbReference>
<dbReference type="InterPro" id="IPR000473">
    <property type="entry name" value="Ribosomal_bL36"/>
</dbReference>
<dbReference type="InterPro" id="IPR035977">
    <property type="entry name" value="Ribosomal_bL36_sp"/>
</dbReference>
<dbReference type="NCBIfam" id="TIGR01022">
    <property type="entry name" value="rpmJ_bact"/>
    <property type="match status" value="1"/>
</dbReference>
<dbReference type="PANTHER" id="PTHR42888">
    <property type="entry name" value="50S RIBOSOMAL PROTEIN L36, CHLOROPLASTIC"/>
    <property type="match status" value="1"/>
</dbReference>
<dbReference type="PANTHER" id="PTHR42888:SF1">
    <property type="entry name" value="LARGE RIBOSOMAL SUBUNIT PROTEIN BL36C"/>
    <property type="match status" value="1"/>
</dbReference>
<dbReference type="Pfam" id="PF00444">
    <property type="entry name" value="Ribosomal_L36"/>
    <property type="match status" value="1"/>
</dbReference>
<dbReference type="SUPFAM" id="SSF57840">
    <property type="entry name" value="Ribosomal protein L36"/>
    <property type="match status" value="1"/>
</dbReference>
<dbReference type="PROSITE" id="PS00828">
    <property type="entry name" value="RIBOSOMAL_L36"/>
    <property type="match status" value="1"/>
</dbReference>